<comment type="function">
    <text evidence="1">An accessory protein needed during the final step in the assembly of 30S ribosomal subunit, possibly for assembly of the head region. Essential for efficient processing of 16S rRNA. May be needed both before and after RbfA during the maturation of 16S rRNA. It has affinity for free ribosomal 30S subunits but not for 70S ribosomes.</text>
</comment>
<comment type="subunit">
    <text evidence="1">Binds ribosomal protein uS19.</text>
</comment>
<comment type="subcellular location">
    <subcellularLocation>
        <location evidence="1">Cytoplasm</location>
    </subcellularLocation>
</comment>
<comment type="domain">
    <text evidence="1">The PRC barrel domain binds ribosomal protein uS19.</text>
</comment>
<comment type="similarity">
    <text evidence="1">Belongs to the RimM family.</text>
</comment>
<keyword id="KW-0143">Chaperone</keyword>
<keyword id="KW-0963">Cytoplasm</keyword>
<keyword id="KW-0690">Ribosome biogenesis</keyword>
<keyword id="KW-0698">rRNA processing</keyword>
<name>RIMM_ECOHS</name>
<proteinExistence type="inferred from homology"/>
<feature type="chain" id="PRO_1000057117" description="Ribosome maturation factor RimM">
    <location>
        <begin position="1"/>
        <end position="182"/>
    </location>
</feature>
<feature type="domain" description="PRC barrel" evidence="1">
    <location>
        <begin position="103"/>
        <end position="182"/>
    </location>
</feature>
<reference key="1">
    <citation type="journal article" date="2008" name="J. Bacteriol.">
        <title>The pangenome structure of Escherichia coli: comparative genomic analysis of E. coli commensal and pathogenic isolates.</title>
        <authorList>
            <person name="Rasko D.A."/>
            <person name="Rosovitz M.J."/>
            <person name="Myers G.S.A."/>
            <person name="Mongodin E.F."/>
            <person name="Fricke W.F."/>
            <person name="Gajer P."/>
            <person name="Crabtree J."/>
            <person name="Sebaihia M."/>
            <person name="Thomson N.R."/>
            <person name="Chaudhuri R."/>
            <person name="Henderson I.R."/>
            <person name="Sperandio V."/>
            <person name="Ravel J."/>
        </authorList>
    </citation>
    <scope>NUCLEOTIDE SEQUENCE [LARGE SCALE GENOMIC DNA]</scope>
    <source>
        <strain>HS</strain>
    </source>
</reference>
<sequence>MSKQLTAQAPVDPIVLGKMGSSYGIRGWLRVFSSTEDAESIFDYQPWFIQKAGQWQQVQLESWKHHNQDMIIKLKGVDDRDAANLLTNCEIVVDSSQLPQLEEGDYYWKDLMGCQVVTTEGYDLGKVVDMMETGSNDVLVIKANLKDAFGIKERLVPFLDGQVIKKVDLTTRSIEVDWDPGF</sequence>
<dbReference type="EMBL" id="CP000802">
    <property type="protein sequence ID" value="ABV07019.1"/>
    <property type="molecule type" value="Genomic_DNA"/>
</dbReference>
<dbReference type="RefSeq" id="WP_000043335.1">
    <property type="nucleotide sequence ID" value="NC_009800.1"/>
</dbReference>
<dbReference type="SMR" id="A8A3B5"/>
<dbReference type="GeneID" id="93774458"/>
<dbReference type="KEGG" id="ecx:EcHS_A2767"/>
<dbReference type="HOGENOM" id="CLU_077636_1_0_6"/>
<dbReference type="GO" id="GO:0005737">
    <property type="term" value="C:cytoplasm"/>
    <property type="evidence" value="ECO:0007669"/>
    <property type="project" value="UniProtKB-SubCell"/>
</dbReference>
<dbReference type="GO" id="GO:0005840">
    <property type="term" value="C:ribosome"/>
    <property type="evidence" value="ECO:0007669"/>
    <property type="project" value="InterPro"/>
</dbReference>
<dbReference type="GO" id="GO:0043022">
    <property type="term" value="F:ribosome binding"/>
    <property type="evidence" value="ECO:0007669"/>
    <property type="project" value="InterPro"/>
</dbReference>
<dbReference type="GO" id="GO:0042274">
    <property type="term" value="P:ribosomal small subunit biogenesis"/>
    <property type="evidence" value="ECO:0007669"/>
    <property type="project" value="UniProtKB-UniRule"/>
</dbReference>
<dbReference type="GO" id="GO:0006364">
    <property type="term" value="P:rRNA processing"/>
    <property type="evidence" value="ECO:0007669"/>
    <property type="project" value="UniProtKB-UniRule"/>
</dbReference>
<dbReference type="FunFam" id="2.30.30.240:FF:000001">
    <property type="entry name" value="Ribosome maturation factor RimM"/>
    <property type="match status" value="1"/>
</dbReference>
<dbReference type="FunFam" id="2.40.30.60:FF:000001">
    <property type="entry name" value="Ribosome maturation factor RimM"/>
    <property type="match status" value="1"/>
</dbReference>
<dbReference type="Gene3D" id="2.30.30.240">
    <property type="entry name" value="PRC-barrel domain"/>
    <property type="match status" value="1"/>
</dbReference>
<dbReference type="Gene3D" id="2.40.30.60">
    <property type="entry name" value="RimM"/>
    <property type="match status" value="1"/>
</dbReference>
<dbReference type="HAMAP" id="MF_00014">
    <property type="entry name" value="Ribosome_mat_RimM"/>
    <property type="match status" value="1"/>
</dbReference>
<dbReference type="InterPro" id="IPR011033">
    <property type="entry name" value="PRC_barrel-like_sf"/>
</dbReference>
<dbReference type="InterPro" id="IPR056792">
    <property type="entry name" value="PRC_RimM"/>
</dbReference>
<dbReference type="InterPro" id="IPR011961">
    <property type="entry name" value="RimM"/>
</dbReference>
<dbReference type="InterPro" id="IPR002676">
    <property type="entry name" value="RimM_N"/>
</dbReference>
<dbReference type="InterPro" id="IPR036976">
    <property type="entry name" value="RimM_N_sf"/>
</dbReference>
<dbReference type="InterPro" id="IPR009000">
    <property type="entry name" value="Transl_B-barrel_sf"/>
</dbReference>
<dbReference type="NCBIfam" id="TIGR02273">
    <property type="entry name" value="16S_RimM"/>
    <property type="match status" value="1"/>
</dbReference>
<dbReference type="PANTHER" id="PTHR33692">
    <property type="entry name" value="RIBOSOME MATURATION FACTOR RIMM"/>
    <property type="match status" value="1"/>
</dbReference>
<dbReference type="PANTHER" id="PTHR33692:SF1">
    <property type="entry name" value="RIBOSOME MATURATION FACTOR RIMM"/>
    <property type="match status" value="1"/>
</dbReference>
<dbReference type="Pfam" id="PF24986">
    <property type="entry name" value="PRC_RimM"/>
    <property type="match status" value="1"/>
</dbReference>
<dbReference type="Pfam" id="PF01782">
    <property type="entry name" value="RimM"/>
    <property type="match status" value="1"/>
</dbReference>
<dbReference type="SUPFAM" id="SSF50346">
    <property type="entry name" value="PRC-barrel domain"/>
    <property type="match status" value="1"/>
</dbReference>
<dbReference type="SUPFAM" id="SSF50447">
    <property type="entry name" value="Translation proteins"/>
    <property type="match status" value="1"/>
</dbReference>
<accession>A8A3B5</accession>
<evidence type="ECO:0000255" key="1">
    <source>
        <dbReference type="HAMAP-Rule" id="MF_00014"/>
    </source>
</evidence>
<organism>
    <name type="scientific">Escherichia coli O9:H4 (strain HS)</name>
    <dbReference type="NCBI Taxonomy" id="331112"/>
    <lineage>
        <taxon>Bacteria</taxon>
        <taxon>Pseudomonadati</taxon>
        <taxon>Pseudomonadota</taxon>
        <taxon>Gammaproteobacteria</taxon>
        <taxon>Enterobacterales</taxon>
        <taxon>Enterobacteriaceae</taxon>
        <taxon>Escherichia</taxon>
    </lineage>
</organism>
<gene>
    <name evidence="1" type="primary">rimM</name>
    <name type="ordered locus">EcHS_A2767</name>
</gene>
<protein>
    <recommendedName>
        <fullName evidence="1">Ribosome maturation factor RimM</fullName>
    </recommendedName>
</protein>